<sequence length="383" mass="43032">MGLRAAHTGFVVLVLLQSCAAYKLICYYTSWSQYREGDGSCFPDAIDPFLCTHVIYSFANISNNEIDTWEWNDVTLYDTLNTLKNRNPNLKTLLSVGGWNFGSQRFSKIASKTQSRRTFIKSVPPFLRTHGFDGLDLAWLYPGWRDKRHLTTLVKEMKAEFVREAQAGTEQLLLSAAVPAGKIAIDRGYDIAQISRHLDFISLLTYDFHGAWRQTVGHHSPLFRGQEDASSDRFSNADYAVSYMLRLGAPANKLVMGIPTFGRSYTLASSKTDVGAPISGPGIPGQFTKEKGILAYYEICDFLHGATTHRFRDQQVPYATKGNQWVAYDDQESVKNKARYLKNRQLAGAMVWALDLDDFRGTFCGQNLTFPLTSAIKDVLARV</sequence>
<name>CH3L1_BOVIN</name>
<reference key="1">
    <citation type="journal article" date="2005" name="BMC Genomics">
        <title>Characterization of 954 bovine full-CDS cDNA sequences.</title>
        <authorList>
            <person name="Harhay G.P."/>
            <person name="Sonstegard T.S."/>
            <person name="Keele J.W."/>
            <person name="Heaton M.P."/>
            <person name="Clawson M.L."/>
            <person name="Snelling W.M."/>
            <person name="Wiedmann R.T."/>
            <person name="Van Tassell C.P."/>
            <person name="Smith T.P.L."/>
        </authorList>
    </citation>
    <scope>NUCLEOTIDE SEQUENCE [LARGE SCALE MRNA]</scope>
</reference>
<reference key="2">
    <citation type="submission" date="2006-02" db="EMBL/GenBank/DDBJ databases">
        <title>Signal processing protein from bovine mammary gland.</title>
        <authorList>
            <person name="Srinivasan A."/>
            <person name="Kumar J."/>
            <person name="Singh T.P."/>
        </authorList>
    </citation>
    <scope>NUCLEOTIDE SEQUENCE [MRNA] OF 22-383</scope>
    <source>
        <tissue>Mammary gland</tissue>
    </source>
</reference>
<reference key="3">
    <citation type="journal article" date="1988" name="Biochem. Biophys. Res. Commun.">
        <title>Isolation and characterization of a novel 39 kilodalton whey protein from bovine mammary secretions collected during the nonlactating period.</title>
        <authorList>
            <person name="Rejman J.J."/>
            <person name="Hurley W.L."/>
        </authorList>
    </citation>
    <scope>PROTEIN SEQUENCE OF 22-57</scope>
</reference>
<reference key="4">
    <citation type="submission" date="1997-06" db="EMBL/GenBank/DDBJ databases">
        <title>Expression of chitinase-like protein 1 (CLP-1) in bovine chondrocytes.</title>
        <authorList>
            <person name="Recklies A.D."/>
            <person name="White C."/>
        </authorList>
    </citation>
    <scope>NUCLEOTIDE SEQUENCE [MRNA] OF 25-356</scope>
</reference>
<reference key="5">
    <citation type="journal article" date="2006" name="Acta Crystallogr. D">
        <title>Structure of a bovine secretory signalling glycoprotein (SPC-40) at 2.1 Angstrom resolution.</title>
        <authorList>
            <person name="Kumar J."/>
            <person name="Ethayathulla A.S."/>
            <person name="Srivastava D.B."/>
            <person name="Sharma S."/>
            <person name="Singh S.B."/>
            <person name="Srinivasan A."/>
            <person name="Yadav M.P."/>
            <person name="Singh T.P."/>
        </authorList>
    </citation>
    <scope>X-RAY CRYSTALLOGRAPHY (2.0 ANGSTROMS) OF 22-383</scope>
    <scope>FUNCTION</scope>
    <scope>GLYCOSYLATION AT ASN-60</scope>
    <scope>DISULFIDE BONDS</scope>
</reference>
<accession>P30922</accession>
<accession>O18949</accession>
<accession>Q58CW2</accession>
<accession>Q7YSE8</accession>
<keyword id="KW-0002">3D-structure</keyword>
<keyword id="KW-0929">Antimicrobial</keyword>
<keyword id="KW-0053">Apoptosis</keyword>
<keyword id="KW-0963">Cytoplasm</keyword>
<keyword id="KW-0903">Direct protein sequencing</keyword>
<keyword id="KW-1015">Disulfide bond</keyword>
<keyword id="KW-0256">Endoplasmic reticulum</keyword>
<keyword id="KW-0325">Glycoprotein</keyword>
<keyword id="KW-0395">Inflammatory response</keyword>
<keyword id="KW-0430">Lectin</keyword>
<keyword id="KW-1185">Reference proteome</keyword>
<keyword id="KW-0964">Secreted</keyword>
<keyword id="KW-0732">Signal</keyword>
<evidence type="ECO:0000250" key="1"/>
<evidence type="ECO:0000255" key="2"/>
<evidence type="ECO:0000255" key="3">
    <source>
        <dbReference type="PROSITE-ProRule" id="PRU01258"/>
    </source>
</evidence>
<evidence type="ECO:0000269" key="4">
    <source>
    </source>
</evidence>
<evidence type="ECO:0000269" key="5">
    <source>
    </source>
</evidence>
<evidence type="ECO:0000305" key="6"/>
<evidence type="ECO:0007829" key="7">
    <source>
        <dbReference type="PDB" id="1OWQ"/>
    </source>
</evidence>
<comment type="function">
    <text evidence="1 4">Carbohydrate-binding lectin with a preference for chitin. Has no chitinase activity. May play a role in tissue remodeling and in the capacity of cells to respond to and cope with changes in their environment. Plays a role in T-helper cell type 2 (Th2) inflammatory response and IL-13-induced inflammation, regulating allergen sensitization, inflammatory cell apoptosis, dendritic cell accumulation and M2 macrophage differentiation. Facilitates invasion of pathogenic enteric bacteria into colonic mucosa and lymphoid organs. Mediates activation of AKT1 signaling pathway and subsequent IL8 production in colonic epithelial cells. Regulates antibacterial responses in lung by contributing to macrophage bacterial killing, controlling bacterial dissemination and augmenting host tolerance. Also regulates hyperoxia-induced injury, inflammation and epithelial apoptosis in lung (By similarity).</text>
</comment>
<comment type="subunit">
    <text>Monomer.</text>
</comment>
<comment type="subcellular location">
    <subcellularLocation>
        <location>Secreted</location>
        <location>Extracellular space</location>
    </subcellularLocation>
    <subcellularLocation>
        <location evidence="1">Cytoplasm</location>
    </subcellularLocation>
    <subcellularLocation>
        <location evidence="1">Cytoplasm</location>
        <location evidence="1">Perinuclear region</location>
    </subcellularLocation>
    <subcellularLocation>
        <location evidence="1">Endoplasmic reticulum</location>
    </subcellularLocation>
</comment>
<comment type="tissue specificity">
    <text>Mammary secretions collected during the non-lactating period.</text>
</comment>
<comment type="PTM">
    <text evidence="4">Glycosylated.</text>
</comment>
<comment type="similarity">
    <text evidence="6">Belongs to the glycosyl hydrolase 18 family.</text>
</comment>
<comment type="caution">
    <text evidence="6">Although it belongs to the glycosyl hydrolase 18 family, Leu-140 is present instead of the conserved Glu which is an active site residue. Therefore this protein lacks chitinase activity.</text>
</comment>
<comment type="sequence caution" evidence="6">
    <conflict type="erroneous initiation">
        <sequence resource="EMBL-CDS" id="AAX46682"/>
    </conflict>
    <text>Extended N-terminus.</text>
</comment>
<feature type="signal peptide" evidence="5">
    <location>
        <begin position="1"/>
        <end position="21"/>
    </location>
</feature>
<feature type="chain" id="PRO_0000042787" description="Chitinase-3-like protein 1">
    <location>
        <begin position="22"/>
        <end position="383"/>
    </location>
</feature>
<feature type="domain" description="GH18" evidence="3">
    <location>
        <begin position="22"/>
        <end position="383"/>
    </location>
</feature>
<feature type="region of interest" description="Important for AKT1 activation and IL8 production" evidence="1">
    <location>
        <begin position="324"/>
        <end position="338"/>
    </location>
</feature>
<feature type="binding site" evidence="3">
    <location>
        <begin position="70"/>
        <end position="71"/>
    </location>
    <ligand>
        <name>chitin</name>
        <dbReference type="ChEBI" id="CHEBI:17029"/>
    </ligand>
</feature>
<feature type="binding site" evidence="3">
    <location>
        <begin position="97"/>
        <end position="100"/>
    </location>
    <ligand>
        <name>chitin</name>
        <dbReference type="ChEBI" id="CHEBI:17029"/>
    </ligand>
</feature>
<feature type="binding site" evidence="3">
    <location>
        <position position="141"/>
    </location>
    <ligand>
        <name>chitin</name>
        <dbReference type="ChEBI" id="CHEBI:17029"/>
    </ligand>
</feature>
<feature type="binding site" evidence="3">
    <location>
        <begin position="204"/>
        <end position="207"/>
    </location>
    <ligand>
        <name>chitin</name>
        <dbReference type="ChEBI" id="CHEBI:17029"/>
    </ligand>
</feature>
<feature type="binding site" evidence="1">
    <location>
        <position position="263"/>
    </location>
    <ligand>
        <name>chitin</name>
        <dbReference type="ChEBI" id="CHEBI:17029"/>
    </ligand>
</feature>
<feature type="binding site" evidence="3">
    <location>
        <position position="352"/>
    </location>
    <ligand>
        <name>chitin</name>
        <dbReference type="ChEBI" id="CHEBI:17029"/>
    </ligand>
</feature>
<feature type="glycosylation site" description="N-linked (GlcNAc...) asparagine" evidence="4">
    <location>
        <position position="60"/>
    </location>
</feature>
<feature type="glycosylation site" description="N-linked (GlcNAc...) asparagine" evidence="2">
    <location>
        <position position="367"/>
    </location>
</feature>
<feature type="disulfide bond" evidence="3 4">
    <location>
        <begin position="26"/>
        <end position="51"/>
    </location>
</feature>
<feature type="disulfide bond" evidence="4">
    <location>
        <begin position="300"/>
        <end position="364"/>
    </location>
</feature>
<feature type="sequence conflict" description="In Ref. 4; AAB64304." evidence="6" ref="4">
    <original>I</original>
    <variation>V</variation>
    <location>
        <position position="25"/>
    </location>
</feature>
<feature type="sequence conflict" description="In Ref. 2; AAP41220." evidence="6" ref="2">
    <original>Q</original>
    <variation>E</variation>
    <location>
        <position position="104"/>
    </location>
</feature>
<feature type="sequence conflict" description="In Ref. 4; AAB64304." evidence="6" ref="4">
    <original>E</original>
    <variation>G</variation>
    <location>
        <position position="164"/>
    </location>
</feature>
<feature type="sequence conflict" description="In Ref. 2; AAP41220." evidence="6" ref="2">
    <original>P</original>
    <variation>T</variation>
    <location>
        <position position="179"/>
    </location>
</feature>
<feature type="sequence conflict" description="In Ref. 2; AAP41220." evidence="6" ref="2">
    <original>A</original>
    <variation>G</variation>
    <location>
        <position position="211"/>
    </location>
</feature>
<feature type="sequence conflict" description="In Ref. 2; AAP41220." evidence="6" ref="2">
    <original>Q</original>
    <variation>G</variation>
    <location>
        <position position="214"/>
    </location>
</feature>
<feature type="sequence conflict" description="In Ref. 2; AAP41220." evidence="6" ref="2">
    <original>QEDASSD</original>
    <variation>NSDGSS</variation>
    <location>
        <begin position="226"/>
        <end position="232"/>
    </location>
</feature>
<feature type="sequence conflict" description="In Ref. 2; AAP41220." evidence="6" ref="2">
    <original>KTD</original>
    <variation>STR</variation>
    <location>
        <begin position="271"/>
        <end position="273"/>
    </location>
</feature>
<feature type="sequence conflict" description="In Ref. 1; AAX46682." evidence="6" ref="1">
    <original>T</original>
    <variation>I</variation>
    <location>
        <position position="307"/>
    </location>
</feature>
<feature type="sequence conflict" description="In Ref. 1; AAX46682." evidence="6" ref="1">
    <original>T</original>
    <variation>A</variation>
    <location>
        <position position="369"/>
    </location>
</feature>
<feature type="sequence conflict" description="In Ref. 1; AAX46682." evidence="6" ref="1">
    <original>R</original>
    <variation>E</variation>
    <location>
        <position position="382"/>
    </location>
</feature>
<feature type="strand" evidence="7">
    <location>
        <begin position="23"/>
        <end position="29"/>
    </location>
</feature>
<feature type="helix" evidence="7">
    <location>
        <begin position="30"/>
        <end position="34"/>
    </location>
</feature>
<feature type="helix" evidence="7">
    <location>
        <begin position="37"/>
        <end position="39"/>
    </location>
</feature>
<feature type="helix" evidence="7">
    <location>
        <begin position="43"/>
        <end position="45"/>
    </location>
</feature>
<feature type="turn" evidence="7">
    <location>
        <begin position="48"/>
        <end position="50"/>
    </location>
</feature>
<feature type="strand" evidence="7">
    <location>
        <begin position="52"/>
        <end position="62"/>
    </location>
</feature>
<feature type="strand" evidence="7">
    <location>
        <begin position="65"/>
        <end position="67"/>
    </location>
</feature>
<feature type="helix" evidence="7">
    <location>
        <begin position="73"/>
        <end position="81"/>
    </location>
</feature>
<feature type="helix" evidence="7">
    <location>
        <begin position="82"/>
        <end position="85"/>
    </location>
</feature>
<feature type="strand" evidence="7">
    <location>
        <begin position="91"/>
        <end position="97"/>
    </location>
</feature>
<feature type="helix" evidence="7">
    <location>
        <begin position="103"/>
        <end position="111"/>
    </location>
</feature>
<feature type="helix" evidence="7">
    <location>
        <begin position="113"/>
        <end position="130"/>
    </location>
</feature>
<feature type="strand" evidence="7">
    <location>
        <begin position="133"/>
        <end position="138"/>
    </location>
</feature>
<feature type="turn" evidence="7">
    <location>
        <begin position="144"/>
        <end position="146"/>
    </location>
</feature>
<feature type="helix" evidence="7">
    <location>
        <begin position="147"/>
        <end position="164"/>
    </location>
</feature>
<feature type="helix" evidence="7">
    <location>
        <begin position="165"/>
        <end position="167"/>
    </location>
</feature>
<feature type="strand" evidence="7">
    <location>
        <begin position="173"/>
        <end position="179"/>
    </location>
</feature>
<feature type="helix" evidence="7">
    <location>
        <begin position="182"/>
        <end position="188"/>
    </location>
</feature>
<feature type="helix" evidence="7">
    <location>
        <begin position="191"/>
        <end position="195"/>
    </location>
</feature>
<feature type="strand" evidence="7">
    <location>
        <begin position="199"/>
        <end position="204"/>
    </location>
</feature>
<feature type="strand" evidence="7">
    <location>
        <begin position="211"/>
        <end position="215"/>
    </location>
</feature>
<feature type="helix" evidence="7">
    <location>
        <begin position="237"/>
        <end position="246"/>
    </location>
</feature>
<feature type="helix" evidence="7">
    <location>
        <begin position="251"/>
        <end position="253"/>
    </location>
</feature>
<feature type="strand" evidence="7">
    <location>
        <begin position="254"/>
        <end position="270"/>
    </location>
</feature>
<feature type="strand" evidence="7">
    <location>
        <begin position="277"/>
        <end position="281"/>
    </location>
</feature>
<feature type="turn" evidence="7">
    <location>
        <begin position="286"/>
        <end position="288"/>
    </location>
</feature>
<feature type="strand" evidence="7">
    <location>
        <begin position="293"/>
        <end position="295"/>
    </location>
</feature>
<feature type="helix" evidence="7">
    <location>
        <begin position="296"/>
        <end position="302"/>
    </location>
</feature>
<feature type="turn" evidence="7">
    <location>
        <begin position="303"/>
        <end position="305"/>
    </location>
</feature>
<feature type="strand" evidence="7">
    <location>
        <begin position="307"/>
        <end position="311"/>
    </location>
</feature>
<feature type="turn" evidence="7">
    <location>
        <begin position="312"/>
        <end position="315"/>
    </location>
</feature>
<feature type="strand" evidence="7">
    <location>
        <begin position="316"/>
        <end position="321"/>
    </location>
</feature>
<feature type="strand" evidence="7">
    <location>
        <begin position="324"/>
        <end position="327"/>
    </location>
</feature>
<feature type="helix" evidence="7">
    <location>
        <begin position="331"/>
        <end position="343"/>
    </location>
</feature>
<feature type="strand" evidence="7">
    <location>
        <begin position="347"/>
        <end position="352"/>
    </location>
</feature>
<feature type="helix" evidence="7">
    <location>
        <begin position="354"/>
        <end position="356"/>
    </location>
</feature>
<feature type="strand" evidence="7">
    <location>
        <begin position="359"/>
        <end position="361"/>
    </location>
</feature>
<feature type="strand" evidence="7">
    <location>
        <begin position="363"/>
        <end position="366"/>
    </location>
</feature>
<feature type="helix" evidence="7">
    <location>
        <begin position="371"/>
        <end position="382"/>
    </location>
</feature>
<protein>
    <recommendedName>
        <fullName>Chitinase-3-like protein 1</fullName>
    </recommendedName>
    <alternativeName>
        <fullName>39 kDa whey protein</fullName>
    </alternativeName>
    <alternativeName>
        <fullName>Cartilage glycoprotein 39</fullName>
        <shortName>CGP-39</shortName>
        <shortName>GP-39</shortName>
    </alternativeName>
    <alternativeName>
        <fullName>Chitinase-like protein 1</fullName>
        <shortName>CLP-1</shortName>
    </alternativeName>
    <alternativeName>
        <fullName>SPC-40</fullName>
    </alternativeName>
    <alternativeName>
        <fullName>Signal-processing protein</fullName>
    </alternativeName>
</protein>
<organism>
    <name type="scientific">Bos taurus</name>
    <name type="common">Bovine</name>
    <dbReference type="NCBI Taxonomy" id="9913"/>
    <lineage>
        <taxon>Eukaryota</taxon>
        <taxon>Metazoa</taxon>
        <taxon>Chordata</taxon>
        <taxon>Craniata</taxon>
        <taxon>Vertebrata</taxon>
        <taxon>Euteleostomi</taxon>
        <taxon>Mammalia</taxon>
        <taxon>Eutheria</taxon>
        <taxon>Laurasiatheria</taxon>
        <taxon>Artiodactyla</taxon>
        <taxon>Ruminantia</taxon>
        <taxon>Pecora</taxon>
        <taxon>Bovidae</taxon>
        <taxon>Bovinae</taxon>
        <taxon>Bos</taxon>
    </lineage>
</organism>
<dbReference type="EMBL" id="BT021835">
    <property type="protein sequence ID" value="AAX46682.1"/>
    <property type="status" value="ALT_INIT"/>
    <property type="molecule type" value="mRNA"/>
</dbReference>
<dbReference type="EMBL" id="AY291312">
    <property type="protein sequence ID" value="AAP41220.2"/>
    <property type="molecule type" value="mRNA"/>
</dbReference>
<dbReference type="EMBL" id="AF011373">
    <property type="protein sequence ID" value="AAB64304.1"/>
    <property type="molecule type" value="mRNA"/>
</dbReference>
<dbReference type="PIR" id="A27682">
    <property type="entry name" value="A27682"/>
</dbReference>
<dbReference type="RefSeq" id="NP_001073688.1">
    <property type="nucleotide sequence ID" value="NM_001080219.1"/>
</dbReference>
<dbReference type="PDB" id="1OWQ">
    <property type="method" value="X-ray"/>
    <property type="resolution" value="2.00 A"/>
    <property type="chains" value="A=22-383"/>
</dbReference>
<dbReference type="PDB" id="2ESC">
    <property type="method" value="X-ray"/>
    <property type="resolution" value="2.10 A"/>
    <property type="chains" value="A=22-383"/>
</dbReference>
<dbReference type="PDBsum" id="1OWQ"/>
<dbReference type="PDBsum" id="2ESC"/>
<dbReference type="SMR" id="P30922"/>
<dbReference type="FunCoup" id="P30922">
    <property type="interactions" value="59"/>
</dbReference>
<dbReference type="STRING" id="9913.ENSBTAP00000024253"/>
<dbReference type="CAZy" id="GH18">
    <property type="family name" value="Glycoside Hydrolase Family 18"/>
</dbReference>
<dbReference type="GlyCosmos" id="P30922">
    <property type="glycosylation" value="2 sites, No reported glycans"/>
</dbReference>
<dbReference type="GlyGen" id="P30922">
    <property type="glycosylation" value="2 sites"/>
</dbReference>
<dbReference type="iPTMnet" id="P30922"/>
<dbReference type="PaxDb" id="9913-ENSBTAP00000024253"/>
<dbReference type="PeptideAtlas" id="P30922"/>
<dbReference type="GeneID" id="286869"/>
<dbReference type="KEGG" id="bta:286869"/>
<dbReference type="CTD" id="1116"/>
<dbReference type="eggNOG" id="KOG2806">
    <property type="taxonomic scope" value="Eukaryota"/>
</dbReference>
<dbReference type="InParanoid" id="P30922"/>
<dbReference type="OrthoDB" id="76388at2759"/>
<dbReference type="EvolutionaryTrace" id="P30922"/>
<dbReference type="Proteomes" id="UP000009136">
    <property type="component" value="Unplaced"/>
</dbReference>
<dbReference type="GO" id="GO:0005737">
    <property type="term" value="C:cytoplasm"/>
    <property type="evidence" value="ECO:0000250"/>
    <property type="project" value="UniProtKB"/>
</dbReference>
<dbReference type="GO" id="GO:0005783">
    <property type="term" value="C:endoplasmic reticulum"/>
    <property type="evidence" value="ECO:0000250"/>
    <property type="project" value="UniProtKB"/>
</dbReference>
<dbReference type="GO" id="GO:0005576">
    <property type="term" value="C:extracellular region"/>
    <property type="evidence" value="ECO:0000318"/>
    <property type="project" value="GO_Central"/>
</dbReference>
<dbReference type="GO" id="GO:0005615">
    <property type="term" value="C:extracellular space"/>
    <property type="evidence" value="ECO:0000250"/>
    <property type="project" value="UniProtKB"/>
</dbReference>
<dbReference type="GO" id="GO:0048471">
    <property type="term" value="C:perinuclear region of cytoplasm"/>
    <property type="evidence" value="ECO:0007669"/>
    <property type="project" value="UniProtKB-SubCell"/>
</dbReference>
<dbReference type="GO" id="GO:0030246">
    <property type="term" value="F:carbohydrate binding"/>
    <property type="evidence" value="ECO:0007669"/>
    <property type="project" value="UniProtKB-KW"/>
</dbReference>
<dbReference type="GO" id="GO:0008061">
    <property type="term" value="F:chitin binding"/>
    <property type="evidence" value="ECO:0000250"/>
    <property type="project" value="UniProtKB"/>
</dbReference>
<dbReference type="GO" id="GO:0007250">
    <property type="term" value="P:activation of NF-kappaB-inducing kinase activity"/>
    <property type="evidence" value="ECO:0000250"/>
    <property type="project" value="UniProtKB"/>
</dbReference>
<dbReference type="GO" id="GO:0006915">
    <property type="term" value="P:apoptotic process"/>
    <property type="evidence" value="ECO:0007669"/>
    <property type="project" value="UniProtKB-KW"/>
</dbReference>
<dbReference type="GO" id="GO:0005975">
    <property type="term" value="P:carbohydrate metabolic process"/>
    <property type="evidence" value="ECO:0007669"/>
    <property type="project" value="InterPro"/>
</dbReference>
<dbReference type="GO" id="GO:0071356">
    <property type="term" value="P:cellular response to tumor necrosis factor"/>
    <property type="evidence" value="ECO:0000250"/>
    <property type="project" value="UniProtKB"/>
</dbReference>
<dbReference type="GO" id="GO:0006032">
    <property type="term" value="P:chitin catabolic process"/>
    <property type="evidence" value="ECO:0000318"/>
    <property type="project" value="GO_Central"/>
</dbReference>
<dbReference type="GO" id="GO:0006954">
    <property type="term" value="P:inflammatory response"/>
    <property type="evidence" value="ECO:0000250"/>
    <property type="project" value="UniProtKB"/>
</dbReference>
<dbReference type="GO" id="GO:0030324">
    <property type="term" value="P:lung development"/>
    <property type="evidence" value="ECO:0000250"/>
    <property type="project" value="UniProtKB"/>
</dbReference>
<dbReference type="GO" id="GO:0045766">
    <property type="term" value="P:positive regulation of angiogenesis"/>
    <property type="evidence" value="ECO:0000250"/>
    <property type="project" value="UniProtKB"/>
</dbReference>
<dbReference type="GO" id="GO:0070374">
    <property type="term" value="P:positive regulation of ERK1 and ERK2 cascade"/>
    <property type="evidence" value="ECO:0000250"/>
    <property type="project" value="UniProtKB"/>
</dbReference>
<dbReference type="GO" id="GO:0032757">
    <property type="term" value="P:positive regulation of interleukin-8 production"/>
    <property type="evidence" value="ECO:0000250"/>
    <property type="project" value="UniProtKB"/>
</dbReference>
<dbReference type="GO" id="GO:0010800">
    <property type="term" value="P:positive regulation of peptidyl-threonine phosphorylation"/>
    <property type="evidence" value="ECO:0000250"/>
    <property type="project" value="UniProtKB"/>
</dbReference>
<dbReference type="GO" id="GO:0051897">
    <property type="term" value="P:positive regulation of phosphatidylinositol 3-kinase/protein kinase B signal transduction"/>
    <property type="evidence" value="ECO:0000250"/>
    <property type="project" value="UniProtKB"/>
</dbReference>
<dbReference type="GO" id="GO:0070555">
    <property type="term" value="P:response to interleukin-1"/>
    <property type="evidence" value="ECO:0000250"/>
    <property type="project" value="UniProtKB"/>
</dbReference>
<dbReference type="GO" id="GO:0070741">
    <property type="term" value="P:response to interleukin-6"/>
    <property type="evidence" value="ECO:0000250"/>
    <property type="project" value="UniProtKB"/>
</dbReference>
<dbReference type="GO" id="GO:0009612">
    <property type="term" value="P:response to mechanical stimulus"/>
    <property type="evidence" value="ECO:0000250"/>
    <property type="project" value="UniProtKB"/>
</dbReference>
<dbReference type="GO" id="GO:0034612">
    <property type="term" value="P:response to tumor necrosis factor"/>
    <property type="evidence" value="ECO:0000250"/>
    <property type="project" value="UniProtKB"/>
</dbReference>
<dbReference type="CDD" id="cd02872">
    <property type="entry name" value="GH18_chitolectin_chitotriosidase"/>
    <property type="match status" value="1"/>
</dbReference>
<dbReference type="FunFam" id="3.10.50.10:FF:000001">
    <property type="entry name" value="Chitinase 3-like 1"/>
    <property type="match status" value="1"/>
</dbReference>
<dbReference type="FunFam" id="3.20.20.80:FF:000047">
    <property type="entry name" value="Chitinase-3-like protein 1"/>
    <property type="match status" value="1"/>
</dbReference>
<dbReference type="Gene3D" id="3.10.50.10">
    <property type="match status" value="1"/>
</dbReference>
<dbReference type="Gene3D" id="3.20.20.80">
    <property type="entry name" value="Glycosidases"/>
    <property type="match status" value="1"/>
</dbReference>
<dbReference type="InterPro" id="IPR011583">
    <property type="entry name" value="Chitinase_II/V-like_cat"/>
</dbReference>
<dbReference type="InterPro" id="IPR029070">
    <property type="entry name" value="Chitinase_insertion_sf"/>
</dbReference>
<dbReference type="InterPro" id="IPR001223">
    <property type="entry name" value="Glyco_hydro18_cat"/>
</dbReference>
<dbReference type="InterPro" id="IPR017853">
    <property type="entry name" value="Glycoside_hydrolase_SF"/>
</dbReference>
<dbReference type="InterPro" id="IPR050314">
    <property type="entry name" value="Glycosyl_Hydrlase_18"/>
</dbReference>
<dbReference type="PANTHER" id="PTHR11177">
    <property type="entry name" value="CHITINASE"/>
    <property type="match status" value="1"/>
</dbReference>
<dbReference type="PANTHER" id="PTHR11177:SF202">
    <property type="entry name" value="CHITINASE-3-LIKE PROTEIN 1"/>
    <property type="match status" value="1"/>
</dbReference>
<dbReference type="Pfam" id="PF00704">
    <property type="entry name" value="Glyco_hydro_18"/>
    <property type="match status" value="1"/>
</dbReference>
<dbReference type="SMART" id="SM00636">
    <property type="entry name" value="Glyco_18"/>
    <property type="match status" value="1"/>
</dbReference>
<dbReference type="SUPFAM" id="SSF51445">
    <property type="entry name" value="(Trans)glycosidases"/>
    <property type="match status" value="1"/>
</dbReference>
<dbReference type="SUPFAM" id="SSF54556">
    <property type="entry name" value="Chitinase insertion domain"/>
    <property type="match status" value="1"/>
</dbReference>
<dbReference type="PROSITE" id="PS51910">
    <property type="entry name" value="GH18_2"/>
    <property type="match status" value="1"/>
</dbReference>
<gene>
    <name type="primary">CHI3L1</name>
</gene>
<proteinExistence type="evidence at protein level"/>